<evidence type="ECO:0000255" key="1">
    <source>
        <dbReference type="HAMAP-Rule" id="MF_00041"/>
    </source>
</evidence>
<protein>
    <recommendedName>
        <fullName evidence="1">Cysteine--tRNA ligase</fullName>
        <ecNumber evidence="1">6.1.1.16</ecNumber>
    </recommendedName>
    <alternativeName>
        <fullName evidence="1">Cysteinyl-tRNA synthetase</fullName>
        <shortName evidence="1">CysRS</shortName>
    </alternativeName>
</protein>
<reference key="1">
    <citation type="journal article" date="2005" name="Proc. Natl. Acad. Sci. U.S.A.">
        <title>Comparison of the complete genome sequences of Pseudomonas syringae pv. syringae B728a and pv. tomato DC3000.</title>
        <authorList>
            <person name="Feil H."/>
            <person name="Feil W.S."/>
            <person name="Chain P."/>
            <person name="Larimer F."/>
            <person name="Dibartolo G."/>
            <person name="Copeland A."/>
            <person name="Lykidis A."/>
            <person name="Trong S."/>
            <person name="Nolan M."/>
            <person name="Goltsman E."/>
            <person name="Thiel J."/>
            <person name="Malfatti S."/>
            <person name="Loper J.E."/>
            <person name="Lapidus A."/>
            <person name="Detter J.C."/>
            <person name="Land M."/>
            <person name="Richardson P.M."/>
            <person name="Kyrpides N.C."/>
            <person name="Ivanova N."/>
            <person name="Lindow S.E."/>
        </authorList>
    </citation>
    <scope>NUCLEOTIDE SEQUENCE [LARGE SCALE GENOMIC DNA]</scope>
    <source>
        <strain>B728a</strain>
    </source>
</reference>
<keyword id="KW-0030">Aminoacyl-tRNA synthetase</keyword>
<keyword id="KW-0067">ATP-binding</keyword>
<keyword id="KW-0963">Cytoplasm</keyword>
<keyword id="KW-0436">Ligase</keyword>
<keyword id="KW-0479">Metal-binding</keyword>
<keyword id="KW-0547">Nucleotide-binding</keyword>
<keyword id="KW-0648">Protein biosynthesis</keyword>
<keyword id="KW-0862">Zinc</keyword>
<comment type="catalytic activity">
    <reaction evidence="1">
        <text>tRNA(Cys) + L-cysteine + ATP = L-cysteinyl-tRNA(Cys) + AMP + diphosphate</text>
        <dbReference type="Rhea" id="RHEA:17773"/>
        <dbReference type="Rhea" id="RHEA-COMP:9661"/>
        <dbReference type="Rhea" id="RHEA-COMP:9679"/>
        <dbReference type="ChEBI" id="CHEBI:30616"/>
        <dbReference type="ChEBI" id="CHEBI:33019"/>
        <dbReference type="ChEBI" id="CHEBI:35235"/>
        <dbReference type="ChEBI" id="CHEBI:78442"/>
        <dbReference type="ChEBI" id="CHEBI:78517"/>
        <dbReference type="ChEBI" id="CHEBI:456215"/>
        <dbReference type="EC" id="6.1.1.16"/>
    </reaction>
</comment>
<comment type="cofactor">
    <cofactor evidence="1">
        <name>Zn(2+)</name>
        <dbReference type="ChEBI" id="CHEBI:29105"/>
    </cofactor>
    <text evidence="1">Binds 1 zinc ion per subunit.</text>
</comment>
<comment type="subunit">
    <text evidence="1">Monomer.</text>
</comment>
<comment type="subcellular location">
    <subcellularLocation>
        <location evidence="1">Cytoplasm</location>
    </subcellularLocation>
</comment>
<comment type="similarity">
    <text evidence="1">Belongs to the class-I aminoacyl-tRNA synthetase family.</text>
</comment>
<accession>Q4ZVN9</accession>
<gene>
    <name evidence="1" type="primary">cysS</name>
    <name type="ordered locus">Psyr_1735</name>
</gene>
<feature type="chain" id="PRO_0000240939" description="Cysteine--tRNA ligase">
    <location>
        <begin position="1"/>
        <end position="460"/>
    </location>
</feature>
<feature type="short sequence motif" description="'HIGH' region">
    <location>
        <begin position="30"/>
        <end position="40"/>
    </location>
</feature>
<feature type="short sequence motif" description="'KMSKS' region">
    <location>
        <begin position="266"/>
        <end position="270"/>
    </location>
</feature>
<feature type="binding site" evidence="1">
    <location>
        <position position="28"/>
    </location>
    <ligand>
        <name>Zn(2+)</name>
        <dbReference type="ChEBI" id="CHEBI:29105"/>
    </ligand>
</feature>
<feature type="binding site" evidence="1">
    <location>
        <position position="209"/>
    </location>
    <ligand>
        <name>Zn(2+)</name>
        <dbReference type="ChEBI" id="CHEBI:29105"/>
    </ligand>
</feature>
<feature type="binding site" evidence="1">
    <location>
        <position position="234"/>
    </location>
    <ligand>
        <name>Zn(2+)</name>
        <dbReference type="ChEBI" id="CHEBI:29105"/>
    </ligand>
</feature>
<feature type="binding site" evidence="1">
    <location>
        <position position="238"/>
    </location>
    <ligand>
        <name>Zn(2+)</name>
        <dbReference type="ChEBI" id="CHEBI:29105"/>
    </ligand>
</feature>
<feature type="binding site" evidence="1">
    <location>
        <position position="269"/>
    </location>
    <ligand>
        <name>ATP</name>
        <dbReference type="ChEBI" id="CHEBI:30616"/>
    </ligand>
</feature>
<dbReference type="EC" id="6.1.1.16" evidence="1"/>
<dbReference type="EMBL" id="CP000075">
    <property type="protein sequence ID" value="AAY36783.1"/>
    <property type="molecule type" value="Genomic_DNA"/>
</dbReference>
<dbReference type="RefSeq" id="WP_011267207.1">
    <property type="nucleotide sequence ID" value="NC_007005.1"/>
</dbReference>
<dbReference type="RefSeq" id="YP_234821.1">
    <property type="nucleotide sequence ID" value="NC_007005.1"/>
</dbReference>
<dbReference type="SMR" id="Q4ZVN9"/>
<dbReference type="STRING" id="205918.Psyr_1735"/>
<dbReference type="KEGG" id="psb:Psyr_1735"/>
<dbReference type="PATRIC" id="fig|205918.7.peg.1774"/>
<dbReference type="eggNOG" id="COG0215">
    <property type="taxonomic scope" value="Bacteria"/>
</dbReference>
<dbReference type="HOGENOM" id="CLU_013528_0_1_6"/>
<dbReference type="OrthoDB" id="9815130at2"/>
<dbReference type="Proteomes" id="UP000000426">
    <property type="component" value="Chromosome"/>
</dbReference>
<dbReference type="GO" id="GO:0005829">
    <property type="term" value="C:cytosol"/>
    <property type="evidence" value="ECO:0007669"/>
    <property type="project" value="TreeGrafter"/>
</dbReference>
<dbReference type="GO" id="GO:0005524">
    <property type="term" value="F:ATP binding"/>
    <property type="evidence" value="ECO:0007669"/>
    <property type="project" value="UniProtKB-UniRule"/>
</dbReference>
<dbReference type="GO" id="GO:0004817">
    <property type="term" value="F:cysteine-tRNA ligase activity"/>
    <property type="evidence" value="ECO:0007669"/>
    <property type="project" value="UniProtKB-UniRule"/>
</dbReference>
<dbReference type="GO" id="GO:0008270">
    <property type="term" value="F:zinc ion binding"/>
    <property type="evidence" value="ECO:0007669"/>
    <property type="project" value="UniProtKB-UniRule"/>
</dbReference>
<dbReference type="GO" id="GO:0006423">
    <property type="term" value="P:cysteinyl-tRNA aminoacylation"/>
    <property type="evidence" value="ECO:0007669"/>
    <property type="project" value="UniProtKB-UniRule"/>
</dbReference>
<dbReference type="CDD" id="cd07963">
    <property type="entry name" value="Anticodon_Ia_Cys"/>
    <property type="match status" value="1"/>
</dbReference>
<dbReference type="CDD" id="cd00672">
    <property type="entry name" value="CysRS_core"/>
    <property type="match status" value="1"/>
</dbReference>
<dbReference type="FunFam" id="3.40.50.620:FF:000009">
    <property type="entry name" value="Cysteine--tRNA ligase"/>
    <property type="match status" value="1"/>
</dbReference>
<dbReference type="Gene3D" id="1.20.120.1910">
    <property type="entry name" value="Cysteine-tRNA ligase, C-terminal anti-codon recognition domain"/>
    <property type="match status" value="1"/>
</dbReference>
<dbReference type="Gene3D" id="3.40.50.620">
    <property type="entry name" value="HUPs"/>
    <property type="match status" value="1"/>
</dbReference>
<dbReference type="HAMAP" id="MF_00041">
    <property type="entry name" value="Cys_tRNA_synth"/>
    <property type="match status" value="1"/>
</dbReference>
<dbReference type="InterPro" id="IPR015803">
    <property type="entry name" value="Cys-tRNA-ligase"/>
</dbReference>
<dbReference type="InterPro" id="IPR015273">
    <property type="entry name" value="Cys-tRNA-synt_Ia_DALR"/>
</dbReference>
<dbReference type="InterPro" id="IPR024909">
    <property type="entry name" value="Cys-tRNA/MSH_ligase"/>
</dbReference>
<dbReference type="InterPro" id="IPR056411">
    <property type="entry name" value="CysS_C"/>
</dbReference>
<dbReference type="InterPro" id="IPR014729">
    <property type="entry name" value="Rossmann-like_a/b/a_fold"/>
</dbReference>
<dbReference type="InterPro" id="IPR032678">
    <property type="entry name" value="tRNA-synt_1_cat_dom"/>
</dbReference>
<dbReference type="InterPro" id="IPR009080">
    <property type="entry name" value="tRNAsynth_Ia_anticodon-bd"/>
</dbReference>
<dbReference type="NCBIfam" id="TIGR00435">
    <property type="entry name" value="cysS"/>
    <property type="match status" value="1"/>
</dbReference>
<dbReference type="PANTHER" id="PTHR10890:SF3">
    <property type="entry name" value="CYSTEINE--TRNA LIGASE, CYTOPLASMIC"/>
    <property type="match status" value="1"/>
</dbReference>
<dbReference type="PANTHER" id="PTHR10890">
    <property type="entry name" value="CYSTEINYL-TRNA SYNTHETASE"/>
    <property type="match status" value="1"/>
</dbReference>
<dbReference type="Pfam" id="PF23493">
    <property type="entry name" value="CysS_C"/>
    <property type="match status" value="1"/>
</dbReference>
<dbReference type="Pfam" id="PF09190">
    <property type="entry name" value="DALR_2"/>
    <property type="match status" value="1"/>
</dbReference>
<dbReference type="Pfam" id="PF01406">
    <property type="entry name" value="tRNA-synt_1e"/>
    <property type="match status" value="1"/>
</dbReference>
<dbReference type="PRINTS" id="PR00983">
    <property type="entry name" value="TRNASYNTHCYS"/>
</dbReference>
<dbReference type="SMART" id="SM00840">
    <property type="entry name" value="DALR_2"/>
    <property type="match status" value="1"/>
</dbReference>
<dbReference type="SUPFAM" id="SSF47323">
    <property type="entry name" value="Anticodon-binding domain of a subclass of class I aminoacyl-tRNA synthetases"/>
    <property type="match status" value="1"/>
</dbReference>
<dbReference type="SUPFAM" id="SSF52374">
    <property type="entry name" value="Nucleotidylyl transferase"/>
    <property type="match status" value="1"/>
</dbReference>
<sequence length="460" mass="51565">MLSIYNTLTKSKEVFKPLDGNKVRMYVCGMTVYDYCHLGHGRSMVAFDLVTRWLRFSGYELTYVRNITDIDDKIINRARENGESFDALTARMIEAMHEDEARLNILKPDMEPRATDHIPGMHAMIQTLIDKGYAYAPGNGDVYYRVGKFQGYGKLSRKKIEDLRIGARIEVDESKEDPLDFVLWKGVKPGEPSWESPWGAGRPGWHIECSVMSTCCLGETFDIHGGGSDLEFPHHENEIAQSEAATGKTYANAWLHCGMIRINGEKMSKSLNNFFTIRDVLEKYHPEVVRYLLVSSHYRSAINYSEDSLRESKAALERFYHALKGLPVAEPAGGEAFVERFSTAMNDDFGTPEACAVLFEMVREINRLRESDIAAAACLAARLKQLASVLGVLQLEADDFLRAGAEGRVDAAEVEALIQARLAARAAKDWAESDRIRDRITAMGVLLEDGKGGTTWRLAD</sequence>
<organism>
    <name type="scientific">Pseudomonas syringae pv. syringae (strain B728a)</name>
    <dbReference type="NCBI Taxonomy" id="205918"/>
    <lineage>
        <taxon>Bacteria</taxon>
        <taxon>Pseudomonadati</taxon>
        <taxon>Pseudomonadota</taxon>
        <taxon>Gammaproteobacteria</taxon>
        <taxon>Pseudomonadales</taxon>
        <taxon>Pseudomonadaceae</taxon>
        <taxon>Pseudomonas</taxon>
        <taxon>Pseudomonas syringae</taxon>
    </lineage>
</organism>
<name>SYC_PSEU2</name>
<proteinExistence type="inferred from homology"/>